<reference key="1">
    <citation type="journal article" date="2005" name="BMC Genomics">
        <title>Characterization of 954 bovine full-CDS cDNA sequences.</title>
        <authorList>
            <person name="Harhay G.P."/>
            <person name="Sonstegard T.S."/>
            <person name="Keele J.W."/>
            <person name="Heaton M.P."/>
            <person name="Clawson M.L."/>
            <person name="Snelling W.M."/>
            <person name="Wiedmann R.T."/>
            <person name="Van Tassell C.P."/>
            <person name="Smith T.P.L."/>
        </authorList>
    </citation>
    <scope>NUCLEOTIDE SEQUENCE [LARGE SCALE MRNA]</scope>
</reference>
<reference key="2">
    <citation type="submission" date="2006-02" db="EMBL/GenBank/DDBJ databases">
        <authorList>
            <consortium name="NIH - Mammalian Gene Collection (MGC) project"/>
        </authorList>
    </citation>
    <scope>NUCLEOTIDE SEQUENCE [LARGE SCALE MRNA]</scope>
    <source>
        <strain>Hereford</strain>
        <tissue>Uterus</tissue>
    </source>
</reference>
<name>CNN1_BOVIN</name>
<protein>
    <recommendedName>
        <fullName>Calponin-1</fullName>
    </recommendedName>
    <alternativeName>
        <fullName>Basic calponin</fullName>
    </alternativeName>
    <alternativeName>
        <fullName>Calponin H1, smooth muscle</fullName>
    </alternativeName>
</protein>
<sequence length="297" mass="33283">MSSAHFNRGPAYGLSAEVKNKLAQKYDHQREQELREWIEGVTGRRIGNNFMDGLKDGIILCEFINKLQPGSVKKVNESTQNWHQLENIGNFIKAITKYGVKPHDIFEANDLFENTNHTQVQSTLLALASMAKTKGNKVNVGVKYAEKQERRFEPEKLREGRNIIGLQMGTNKFASQQGMTAYGTRRHLYDPKLGTDQPLDQATISLQMGTNKGASQAGMTAPGTKRQIFEPGLGMEHCDTLNVSLQMGSNKGASQRGMTVYGLPRQVYDPKYCLTPEYPELGEPAHNHHPHNYYNSA</sequence>
<gene>
    <name type="primary">CNN1</name>
</gene>
<comment type="function">
    <text evidence="1">Thin filament-associated protein that is implicated in the regulation and modulation of smooth muscle contraction. It is capable of binding to actin, calmodulin and tropomyosin. The interaction of calponin with actin inhibits the actomyosin Mg-ATPase activity (By similarity).</text>
</comment>
<comment type="similarity">
    <text evidence="3">Belongs to the calponin family.</text>
</comment>
<keyword id="KW-0009">Actin-binding</keyword>
<keyword id="KW-0112">Calmodulin-binding</keyword>
<keyword id="KW-0597">Phosphoprotein</keyword>
<keyword id="KW-1185">Reference proteome</keyword>
<keyword id="KW-0677">Repeat</keyword>
<dbReference type="EMBL" id="BT030714">
    <property type="protein sequence ID" value="ABS45030.1"/>
    <property type="molecule type" value="mRNA"/>
</dbReference>
<dbReference type="EMBL" id="BC113327">
    <property type="protein sequence ID" value="AAI13328.1"/>
    <property type="molecule type" value="mRNA"/>
</dbReference>
<dbReference type="RefSeq" id="NP_001039844.1">
    <property type="nucleotide sequence ID" value="NM_001046379.1"/>
</dbReference>
<dbReference type="SMR" id="Q2HJ38"/>
<dbReference type="CORUM" id="Q2HJ38"/>
<dbReference type="FunCoup" id="Q2HJ38">
    <property type="interactions" value="545"/>
</dbReference>
<dbReference type="STRING" id="9913.ENSBTAP00000014883"/>
<dbReference type="PaxDb" id="9913-ENSBTAP00000014883"/>
<dbReference type="PeptideAtlas" id="Q2HJ38"/>
<dbReference type="GeneID" id="534583"/>
<dbReference type="KEGG" id="bta:534583"/>
<dbReference type="CTD" id="1264"/>
<dbReference type="VEuPathDB" id="HostDB:ENSBTAG00000011207"/>
<dbReference type="eggNOG" id="KOG2046">
    <property type="taxonomic scope" value="Eukaryota"/>
</dbReference>
<dbReference type="HOGENOM" id="CLU_055232_0_0_1"/>
<dbReference type="InParanoid" id="Q2HJ38"/>
<dbReference type="OMA" id="GEPTHNH"/>
<dbReference type="OrthoDB" id="21595at2759"/>
<dbReference type="TreeFam" id="TF313921"/>
<dbReference type="Proteomes" id="UP000009136">
    <property type="component" value="Chromosome 7"/>
</dbReference>
<dbReference type="Bgee" id="ENSBTAG00000011207">
    <property type="expression patterns" value="Expressed in vas deferens and 105 other cell types or tissues"/>
</dbReference>
<dbReference type="GO" id="GO:0015629">
    <property type="term" value="C:actin cytoskeleton"/>
    <property type="evidence" value="ECO:0000318"/>
    <property type="project" value="GO_Central"/>
</dbReference>
<dbReference type="GO" id="GO:0051015">
    <property type="term" value="F:actin filament binding"/>
    <property type="evidence" value="ECO:0000318"/>
    <property type="project" value="GO_Central"/>
</dbReference>
<dbReference type="GO" id="GO:0005516">
    <property type="term" value="F:calmodulin binding"/>
    <property type="evidence" value="ECO:0007669"/>
    <property type="project" value="UniProtKB-KW"/>
</dbReference>
<dbReference type="GO" id="GO:0007015">
    <property type="term" value="P:actin filament organization"/>
    <property type="evidence" value="ECO:0000318"/>
    <property type="project" value="GO_Central"/>
</dbReference>
<dbReference type="GO" id="GO:0031032">
    <property type="term" value="P:actomyosin structure organization"/>
    <property type="evidence" value="ECO:0007669"/>
    <property type="project" value="InterPro"/>
</dbReference>
<dbReference type="CDD" id="cd21282">
    <property type="entry name" value="CH_CNN1"/>
    <property type="match status" value="1"/>
</dbReference>
<dbReference type="FunFam" id="1.10.418.10:FF:000040">
    <property type="entry name" value="Calponin"/>
    <property type="match status" value="1"/>
</dbReference>
<dbReference type="Gene3D" id="1.10.418.10">
    <property type="entry name" value="Calponin-like domain"/>
    <property type="match status" value="1"/>
</dbReference>
<dbReference type="InterPro" id="IPR050606">
    <property type="entry name" value="Calponin-like"/>
</dbReference>
<dbReference type="InterPro" id="IPR001997">
    <property type="entry name" value="Calponin/LIMCH1"/>
</dbReference>
<dbReference type="InterPro" id="IPR000557">
    <property type="entry name" value="Calponin_repeat"/>
</dbReference>
<dbReference type="InterPro" id="IPR001715">
    <property type="entry name" value="CH_dom"/>
</dbReference>
<dbReference type="InterPro" id="IPR036872">
    <property type="entry name" value="CH_dom_sf"/>
</dbReference>
<dbReference type="InterPro" id="IPR003096">
    <property type="entry name" value="SM22_calponin"/>
</dbReference>
<dbReference type="PANTHER" id="PTHR47385">
    <property type="entry name" value="CALPONIN"/>
    <property type="match status" value="1"/>
</dbReference>
<dbReference type="PANTHER" id="PTHR47385:SF18">
    <property type="entry name" value="CALPONIN"/>
    <property type="match status" value="1"/>
</dbReference>
<dbReference type="Pfam" id="PF00402">
    <property type="entry name" value="Calponin"/>
    <property type="match status" value="3"/>
</dbReference>
<dbReference type="Pfam" id="PF00307">
    <property type="entry name" value="CH"/>
    <property type="match status" value="1"/>
</dbReference>
<dbReference type="PRINTS" id="PR00889">
    <property type="entry name" value="CALPONIN"/>
</dbReference>
<dbReference type="PRINTS" id="PR00888">
    <property type="entry name" value="SM22CALPONIN"/>
</dbReference>
<dbReference type="SMART" id="SM00033">
    <property type="entry name" value="CH"/>
    <property type="match status" value="1"/>
</dbReference>
<dbReference type="SUPFAM" id="SSF47576">
    <property type="entry name" value="Calponin-homology domain, CH-domain"/>
    <property type="match status" value="1"/>
</dbReference>
<dbReference type="PROSITE" id="PS01052">
    <property type="entry name" value="CALPONIN_1"/>
    <property type="match status" value="3"/>
</dbReference>
<dbReference type="PROSITE" id="PS51122">
    <property type="entry name" value="CALPONIN_2"/>
    <property type="match status" value="3"/>
</dbReference>
<dbReference type="PROSITE" id="PS50021">
    <property type="entry name" value="CH"/>
    <property type="match status" value="1"/>
</dbReference>
<proteinExistence type="evidence at transcript level"/>
<evidence type="ECO:0000250" key="1"/>
<evidence type="ECO:0000255" key="2">
    <source>
        <dbReference type="PROSITE-ProRule" id="PRU00044"/>
    </source>
</evidence>
<evidence type="ECO:0000305" key="3"/>
<feature type="chain" id="PRO_0000244391" description="Calponin-1">
    <location>
        <begin position="1"/>
        <end position="297"/>
    </location>
</feature>
<feature type="domain" description="Calponin-homology (CH)" evidence="2">
    <location>
        <begin position="28"/>
        <end position="131"/>
    </location>
</feature>
<feature type="repeat" description="Calponin-like 1">
    <location>
        <begin position="164"/>
        <end position="189"/>
    </location>
</feature>
<feature type="repeat" description="Calponin-like 2">
    <location>
        <begin position="204"/>
        <end position="229"/>
    </location>
</feature>
<feature type="repeat" description="Calponin-like 3">
    <location>
        <begin position="243"/>
        <end position="268"/>
    </location>
</feature>
<feature type="modified residue" description="Phosphothreonine; by ROCK2" evidence="1">
    <location>
        <position position="170"/>
    </location>
</feature>
<feature type="modified residue" description="Phosphoserine; by ROCK2" evidence="1">
    <location>
        <position position="175"/>
    </location>
</feature>
<feature type="modified residue" description="Phosphothreonine; by ROCK2" evidence="1">
    <location>
        <position position="180"/>
    </location>
</feature>
<feature type="modified residue" description="Phosphothreonine; by ROCK2" evidence="1">
    <location>
        <position position="184"/>
    </location>
</feature>
<feature type="modified residue" description="Phosphothreonine; by ROCK2" evidence="1">
    <location>
        <position position="259"/>
    </location>
</feature>
<organism>
    <name type="scientific">Bos taurus</name>
    <name type="common">Bovine</name>
    <dbReference type="NCBI Taxonomy" id="9913"/>
    <lineage>
        <taxon>Eukaryota</taxon>
        <taxon>Metazoa</taxon>
        <taxon>Chordata</taxon>
        <taxon>Craniata</taxon>
        <taxon>Vertebrata</taxon>
        <taxon>Euteleostomi</taxon>
        <taxon>Mammalia</taxon>
        <taxon>Eutheria</taxon>
        <taxon>Laurasiatheria</taxon>
        <taxon>Artiodactyla</taxon>
        <taxon>Ruminantia</taxon>
        <taxon>Pecora</taxon>
        <taxon>Bovidae</taxon>
        <taxon>Bovinae</taxon>
        <taxon>Bos</taxon>
    </lineage>
</organism>
<accession>Q2HJ38</accession>
<accession>A7E3U3</accession>